<protein>
    <recommendedName>
        <fullName evidence="2">Protein YhgO</fullName>
    </recommendedName>
</protein>
<keyword id="KW-1185">Reference proteome</keyword>
<name>YHGO_ECOLI</name>
<comment type="induction">
    <text evidence="1">Expressed at low levels in exponential and stationary phase in rich medium (at protein level).</text>
</comment>
<comment type="miscellaneous">
    <text evidence="1">This gene overlaps yhgP on the same strand in another reading frame.</text>
</comment>
<dbReference type="EMBL" id="U00096">
    <property type="protein sequence ID" value="QNV50541.1"/>
    <property type="molecule type" value="Genomic_DNA"/>
</dbReference>
<dbReference type="InParanoid" id="P0DSG6"/>
<dbReference type="BioCyc" id="EcoCyc:MONOMER0-4500"/>
<dbReference type="Proteomes" id="UP000000625">
    <property type="component" value="Chromosome"/>
</dbReference>
<feature type="chain" id="PRO_0000447148" description="Protein YhgO">
    <location>
        <begin position="1"/>
        <end position="13"/>
    </location>
</feature>
<proteinExistence type="evidence at protein level"/>
<gene>
    <name evidence="2" type="primary">yhgO</name>
    <name evidence="3" type="ordered locus">b4788</name>
</gene>
<sequence length="13" mass="1576">MIYRELNRALAIL</sequence>
<reference key="1">
    <citation type="journal article" date="1997" name="Science">
        <title>The complete genome sequence of Escherichia coli K-12.</title>
        <authorList>
            <person name="Blattner F.R."/>
            <person name="Plunkett G. III"/>
            <person name="Bloch C.A."/>
            <person name="Perna N.T."/>
            <person name="Burland V."/>
            <person name="Riley M."/>
            <person name="Collado-Vides J."/>
            <person name="Glasner J.D."/>
            <person name="Rode C.K."/>
            <person name="Mayhew G.F."/>
            <person name="Gregor J."/>
            <person name="Davis N.W."/>
            <person name="Kirkpatrick H.A."/>
            <person name="Goeden M.A."/>
            <person name="Rose D.J."/>
            <person name="Mau B."/>
            <person name="Shao Y."/>
        </authorList>
    </citation>
    <scope>NUCLEOTIDE SEQUENCE [LARGE SCALE GENOMIC DNA]</scope>
    <source>
        <strain>K12 / MG1655 / ATCC 47076</strain>
    </source>
</reference>
<reference key="2">
    <citation type="journal article" date="2019" name="MBio">
        <title>Identifying small proteins by ribosome profiling with stalled initiation complexes.</title>
        <authorList>
            <person name="Weaver J."/>
            <person name="Mohammad F."/>
            <person name="Buskirk A.R."/>
            <person name="Storz G."/>
        </authorList>
    </citation>
    <scope>IDENTIFICATION</scope>
    <scope>INDUCTION</scope>
    <source>
        <strain>K12 / MG1655 / ATCC 47076</strain>
    </source>
</reference>
<evidence type="ECO:0000269" key="1">
    <source>
    </source>
</evidence>
<evidence type="ECO:0000303" key="2">
    <source>
    </source>
</evidence>
<evidence type="ECO:0000312" key="3">
    <source>
        <dbReference type="EMBL" id="QNV50541.1"/>
    </source>
</evidence>
<organism>
    <name type="scientific">Escherichia coli (strain K12)</name>
    <dbReference type="NCBI Taxonomy" id="83333"/>
    <lineage>
        <taxon>Bacteria</taxon>
        <taxon>Pseudomonadati</taxon>
        <taxon>Pseudomonadota</taxon>
        <taxon>Gammaproteobacteria</taxon>
        <taxon>Enterobacterales</taxon>
        <taxon>Enterobacteriaceae</taxon>
        <taxon>Escherichia</taxon>
    </lineage>
</organism>
<accession>P0DSG6</accession>
<accession>A0A7H2C794</accession>